<gene>
    <name type="primary">vapB22</name>
    <name type="ordered locus">Rv2830c</name>
</gene>
<reference key="1">
    <citation type="journal article" date="1998" name="Nature">
        <title>Deciphering the biology of Mycobacterium tuberculosis from the complete genome sequence.</title>
        <authorList>
            <person name="Cole S.T."/>
            <person name="Brosch R."/>
            <person name="Parkhill J."/>
            <person name="Garnier T."/>
            <person name="Churcher C.M."/>
            <person name="Harris D.E."/>
            <person name="Gordon S.V."/>
            <person name="Eiglmeier K."/>
            <person name="Gas S."/>
            <person name="Barry C.E. III"/>
            <person name="Tekaia F."/>
            <person name="Badcock K."/>
            <person name="Basham D."/>
            <person name="Brown D."/>
            <person name="Chillingworth T."/>
            <person name="Connor R."/>
            <person name="Davies R.M."/>
            <person name="Devlin K."/>
            <person name="Feltwell T."/>
            <person name="Gentles S."/>
            <person name="Hamlin N."/>
            <person name="Holroyd S."/>
            <person name="Hornsby T."/>
            <person name="Jagels K."/>
            <person name="Krogh A."/>
            <person name="McLean J."/>
            <person name="Moule S."/>
            <person name="Murphy L.D."/>
            <person name="Oliver S."/>
            <person name="Osborne J."/>
            <person name="Quail M.A."/>
            <person name="Rajandream M.A."/>
            <person name="Rogers J."/>
            <person name="Rutter S."/>
            <person name="Seeger K."/>
            <person name="Skelton S."/>
            <person name="Squares S."/>
            <person name="Squares R."/>
            <person name="Sulston J.E."/>
            <person name="Taylor K."/>
            <person name="Whitehead S."/>
            <person name="Barrell B.G."/>
        </authorList>
    </citation>
    <scope>NUCLEOTIDE SEQUENCE [LARGE SCALE GENOMIC DNA]</scope>
    <source>
        <strain>ATCC 25618 / H37Rv</strain>
    </source>
</reference>
<reference key="2">
    <citation type="journal article" date="2005" name="Nucleic Acids Res.">
        <title>Toxin-antitoxin loci are highly abundant in free-living but lost from host-associated prokaryotes.</title>
        <authorList>
            <person name="Pandey D.P."/>
            <person name="Gerdes K."/>
        </authorList>
    </citation>
    <scope>POSSIBLE FUNCTION</scope>
    <source>
        <strain>ATCC 25618 / H37Rv</strain>
    </source>
</reference>
<reference key="3">
    <citation type="journal article" date="2009" name="PLoS Genet.">
        <title>Comprehensive functional analysis of Mycobacterium tuberculosis toxin-antitoxin systems: implications for pathogenesis, stress responses, and evolution.</title>
        <authorList>
            <person name="Ramage H.R."/>
            <person name="Connolly L.E."/>
            <person name="Cox J.S."/>
        </authorList>
    </citation>
    <scope>EXPRESSION IN M.SMEGMATIS</scope>
    <scope>FUNCTION AS AN ANTITOXIN</scope>
    <source>
        <strain>ATCC 35801 / TMC 107 / Erdman</strain>
    </source>
</reference>
<keyword id="KW-1185">Reference proteome</keyword>
<keyword id="KW-1277">Toxin-antitoxin system</keyword>
<comment type="function">
    <text evidence="1 3">Antitoxin component of a type II toxin-antitoxin (TA) system. Upon expression in M.smegmatis neutralizes the effect of cognate toxin VapC22.</text>
</comment>
<comment type="similarity">
    <text evidence="2">Belongs to the phD/YefM antitoxin family.</text>
</comment>
<name>VPB22_MYCTU</name>
<organism>
    <name type="scientific">Mycobacterium tuberculosis (strain ATCC 25618 / H37Rv)</name>
    <dbReference type="NCBI Taxonomy" id="83332"/>
    <lineage>
        <taxon>Bacteria</taxon>
        <taxon>Bacillati</taxon>
        <taxon>Actinomycetota</taxon>
        <taxon>Actinomycetes</taxon>
        <taxon>Mycobacteriales</taxon>
        <taxon>Mycobacteriaceae</taxon>
        <taxon>Mycobacterium</taxon>
        <taxon>Mycobacterium tuberculosis complex</taxon>
    </lineage>
</organism>
<proteinExistence type="evidence at protein level"/>
<accession>P71622</accession>
<accession>L0TB01</accession>
<evidence type="ECO:0000269" key="1">
    <source>
    </source>
</evidence>
<evidence type="ECO:0000305" key="2"/>
<evidence type="ECO:0000305" key="3">
    <source>
    </source>
</evidence>
<feature type="chain" id="PRO_0000408047" description="Antitoxin VapB22">
    <location>
        <begin position="1"/>
        <end position="71"/>
    </location>
</feature>
<sequence>MTATEVKAKILSLLDEVAQGEEIEITKHGRTVARLVAATGPHALKGRFSGVAMAAADDDELFTTGVSWNVS</sequence>
<protein>
    <recommendedName>
        <fullName>Antitoxin VapB22</fullName>
    </recommendedName>
</protein>
<dbReference type="EMBL" id="AL123456">
    <property type="protein sequence ID" value="CCP45631.1"/>
    <property type="molecule type" value="Genomic_DNA"/>
</dbReference>
<dbReference type="PIR" id="A70693">
    <property type="entry name" value="A70693"/>
</dbReference>
<dbReference type="RefSeq" id="NP_217346.1">
    <property type="nucleotide sequence ID" value="NC_000962.3"/>
</dbReference>
<dbReference type="RefSeq" id="WP_003912003.1">
    <property type="nucleotide sequence ID" value="NZ_NVQJ01000006.1"/>
</dbReference>
<dbReference type="SMR" id="P71622"/>
<dbReference type="STRING" id="83332.Rv2830c"/>
<dbReference type="PaxDb" id="83332-Rv2830c"/>
<dbReference type="DNASU" id="888537"/>
<dbReference type="GeneID" id="888537"/>
<dbReference type="KEGG" id="mtu:Rv2830c"/>
<dbReference type="KEGG" id="mtv:RVBD_2830c"/>
<dbReference type="TubercuList" id="Rv2830c"/>
<dbReference type="eggNOG" id="COG4118">
    <property type="taxonomic scope" value="Bacteria"/>
</dbReference>
<dbReference type="InParanoid" id="P71622"/>
<dbReference type="OrthoDB" id="557859at2"/>
<dbReference type="PHI-base" id="PHI:10613"/>
<dbReference type="Proteomes" id="UP000001584">
    <property type="component" value="Chromosome"/>
</dbReference>
<dbReference type="GO" id="GO:0045727">
    <property type="term" value="P:positive regulation of translation"/>
    <property type="evidence" value="ECO:0000315"/>
    <property type="project" value="MTBBASE"/>
</dbReference>
<dbReference type="Gene3D" id="3.40.1620.10">
    <property type="entry name" value="YefM-like domain"/>
    <property type="match status" value="1"/>
</dbReference>
<dbReference type="InterPro" id="IPR006442">
    <property type="entry name" value="Antitoxin_Phd/YefM"/>
</dbReference>
<dbReference type="InterPro" id="IPR051416">
    <property type="entry name" value="phD-YefM_TA_antitoxins"/>
</dbReference>
<dbReference type="InterPro" id="IPR036165">
    <property type="entry name" value="YefM-like_sf"/>
</dbReference>
<dbReference type="NCBIfam" id="TIGR01552">
    <property type="entry name" value="phd_fam"/>
    <property type="match status" value="1"/>
</dbReference>
<dbReference type="PANTHER" id="PTHR35377:SF8">
    <property type="entry name" value="ANTITOXIN VAPB22"/>
    <property type="match status" value="1"/>
</dbReference>
<dbReference type="PANTHER" id="PTHR35377">
    <property type="entry name" value="ANTITOXIN VAPB49-RELATED-RELATED"/>
    <property type="match status" value="1"/>
</dbReference>
<dbReference type="Pfam" id="PF02604">
    <property type="entry name" value="PhdYeFM_antitox"/>
    <property type="match status" value="1"/>
</dbReference>
<dbReference type="SUPFAM" id="SSF143120">
    <property type="entry name" value="YefM-like"/>
    <property type="match status" value="1"/>
</dbReference>